<gene>
    <name evidence="1" type="primary">rpsT</name>
    <name type="ordered locus">Helmi_23520</name>
    <name type="ORF">HM1_2427</name>
</gene>
<sequence length="88" mass="9596">MPNIKSAIKRVKIARERTLKNASARSALRTTLKRFEAALASADVDNARAALAKAVRALDKAAAKGLIHKNTASRKKSRITKRFNKAVV</sequence>
<reference key="1">
    <citation type="journal article" date="2008" name="J. Bacteriol.">
        <title>The genome of Heliobacterium modesticaldum, a phototrophic representative of the Firmicutes containing the simplest photosynthetic apparatus.</title>
        <authorList>
            <person name="Sattley W.M."/>
            <person name="Madigan M.T."/>
            <person name="Swingley W.D."/>
            <person name="Cheung P.C."/>
            <person name="Clocksin K.M."/>
            <person name="Conrad A.L."/>
            <person name="Dejesa L.C."/>
            <person name="Honchak B.M."/>
            <person name="Jung D.O."/>
            <person name="Karbach L.E."/>
            <person name="Kurdoglu A."/>
            <person name="Lahiri S."/>
            <person name="Mastrian S.D."/>
            <person name="Page L.E."/>
            <person name="Taylor H.L."/>
            <person name="Wang Z.T."/>
            <person name="Raymond J."/>
            <person name="Chen M."/>
            <person name="Blankenship R.E."/>
            <person name="Touchman J.W."/>
        </authorList>
    </citation>
    <scope>NUCLEOTIDE SEQUENCE [LARGE SCALE GENOMIC DNA]</scope>
    <source>
        <strain>ATCC 51547 / Ice1</strain>
    </source>
</reference>
<feature type="chain" id="PRO_1000126453" description="Small ribosomal subunit protein bS20">
    <location>
        <begin position="1"/>
        <end position="88"/>
    </location>
</feature>
<comment type="function">
    <text evidence="1">Binds directly to 16S ribosomal RNA.</text>
</comment>
<comment type="similarity">
    <text evidence="1">Belongs to the bacterial ribosomal protein bS20 family.</text>
</comment>
<dbReference type="EMBL" id="CP000930">
    <property type="protein sequence ID" value="ABZ84977.1"/>
    <property type="molecule type" value="Genomic_DNA"/>
</dbReference>
<dbReference type="RefSeq" id="WP_012283474.1">
    <property type="nucleotide sequence ID" value="NC_010337.2"/>
</dbReference>
<dbReference type="SMR" id="B0TAC7"/>
<dbReference type="STRING" id="498761.HM1_2427"/>
<dbReference type="KEGG" id="hmo:HM1_2427"/>
<dbReference type="eggNOG" id="COG0268">
    <property type="taxonomic scope" value="Bacteria"/>
</dbReference>
<dbReference type="HOGENOM" id="CLU_160655_1_0_9"/>
<dbReference type="OrthoDB" id="9808392at2"/>
<dbReference type="Proteomes" id="UP000008550">
    <property type="component" value="Chromosome"/>
</dbReference>
<dbReference type="GO" id="GO:0005829">
    <property type="term" value="C:cytosol"/>
    <property type="evidence" value="ECO:0007669"/>
    <property type="project" value="TreeGrafter"/>
</dbReference>
<dbReference type="GO" id="GO:0015935">
    <property type="term" value="C:small ribosomal subunit"/>
    <property type="evidence" value="ECO:0007669"/>
    <property type="project" value="TreeGrafter"/>
</dbReference>
<dbReference type="GO" id="GO:0070181">
    <property type="term" value="F:small ribosomal subunit rRNA binding"/>
    <property type="evidence" value="ECO:0007669"/>
    <property type="project" value="TreeGrafter"/>
</dbReference>
<dbReference type="GO" id="GO:0003735">
    <property type="term" value="F:structural constituent of ribosome"/>
    <property type="evidence" value="ECO:0007669"/>
    <property type="project" value="InterPro"/>
</dbReference>
<dbReference type="GO" id="GO:0006412">
    <property type="term" value="P:translation"/>
    <property type="evidence" value="ECO:0007669"/>
    <property type="project" value="UniProtKB-UniRule"/>
</dbReference>
<dbReference type="FunFam" id="1.20.58.110:FF:000001">
    <property type="entry name" value="30S ribosomal protein S20"/>
    <property type="match status" value="1"/>
</dbReference>
<dbReference type="Gene3D" id="1.20.58.110">
    <property type="entry name" value="Ribosomal protein S20"/>
    <property type="match status" value="1"/>
</dbReference>
<dbReference type="HAMAP" id="MF_00500">
    <property type="entry name" value="Ribosomal_bS20"/>
    <property type="match status" value="1"/>
</dbReference>
<dbReference type="InterPro" id="IPR002583">
    <property type="entry name" value="Ribosomal_bS20"/>
</dbReference>
<dbReference type="InterPro" id="IPR036510">
    <property type="entry name" value="Ribosomal_bS20_sf"/>
</dbReference>
<dbReference type="NCBIfam" id="TIGR00029">
    <property type="entry name" value="S20"/>
    <property type="match status" value="1"/>
</dbReference>
<dbReference type="PANTHER" id="PTHR33398">
    <property type="entry name" value="30S RIBOSOMAL PROTEIN S20"/>
    <property type="match status" value="1"/>
</dbReference>
<dbReference type="PANTHER" id="PTHR33398:SF1">
    <property type="entry name" value="SMALL RIBOSOMAL SUBUNIT PROTEIN BS20C"/>
    <property type="match status" value="1"/>
</dbReference>
<dbReference type="Pfam" id="PF01649">
    <property type="entry name" value="Ribosomal_S20p"/>
    <property type="match status" value="1"/>
</dbReference>
<dbReference type="SUPFAM" id="SSF46992">
    <property type="entry name" value="Ribosomal protein S20"/>
    <property type="match status" value="1"/>
</dbReference>
<protein>
    <recommendedName>
        <fullName evidence="1">Small ribosomal subunit protein bS20</fullName>
    </recommendedName>
    <alternativeName>
        <fullName evidence="2">30S ribosomal protein S20</fullName>
    </alternativeName>
</protein>
<accession>B0TAC7</accession>
<evidence type="ECO:0000255" key="1">
    <source>
        <dbReference type="HAMAP-Rule" id="MF_00500"/>
    </source>
</evidence>
<evidence type="ECO:0000305" key="2"/>
<keyword id="KW-1185">Reference proteome</keyword>
<keyword id="KW-0687">Ribonucleoprotein</keyword>
<keyword id="KW-0689">Ribosomal protein</keyword>
<keyword id="KW-0694">RNA-binding</keyword>
<keyword id="KW-0699">rRNA-binding</keyword>
<organism>
    <name type="scientific">Heliobacterium modesticaldum (strain ATCC 51547 / Ice1)</name>
    <dbReference type="NCBI Taxonomy" id="498761"/>
    <lineage>
        <taxon>Bacteria</taxon>
        <taxon>Bacillati</taxon>
        <taxon>Bacillota</taxon>
        <taxon>Clostridia</taxon>
        <taxon>Eubacteriales</taxon>
        <taxon>Heliobacteriaceae</taxon>
        <taxon>Heliomicrobium</taxon>
    </lineage>
</organism>
<proteinExistence type="inferred from homology"/>
<name>RS20_HELMI</name>